<proteinExistence type="inferred from homology"/>
<feature type="chain" id="PRO_1000132228" description="Probable transcriptional regulatory protein Paes_0496">
    <location>
        <begin position="1"/>
        <end position="250"/>
    </location>
</feature>
<comment type="subcellular location">
    <subcellularLocation>
        <location evidence="1">Cytoplasm</location>
    </subcellularLocation>
</comment>
<comment type="similarity">
    <text evidence="1">Belongs to the TACO1 family.</text>
</comment>
<evidence type="ECO:0000255" key="1">
    <source>
        <dbReference type="HAMAP-Rule" id="MF_00693"/>
    </source>
</evidence>
<name>Y496_PROA2</name>
<organism>
    <name type="scientific">Prosthecochloris aestuarii (strain DSM 271 / SK 413)</name>
    <dbReference type="NCBI Taxonomy" id="290512"/>
    <lineage>
        <taxon>Bacteria</taxon>
        <taxon>Pseudomonadati</taxon>
        <taxon>Chlorobiota</taxon>
        <taxon>Chlorobiia</taxon>
        <taxon>Chlorobiales</taxon>
        <taxon>Chlorobiaceae</taxon>
        <taxon>Prosthecochloris</taxon>
    </lineage>
</organism>
<reference key="1">
    <citation type="submission" date="2008-06" db="EMBL/GenBank/DDBJ databases">
        <title>Complete sequence of chromosome of Prosthecochloris aestuarii DSM 271.</title>
        <authorList>
            <consortium name="US DOE Joint Genome Institute"/>
            <person name="Lucas S."/>
            <person name="Copeland A."/>
            <person name="Lapidus A."/>
            <person name="Glavina del Rio T."/>
            <person name="Dalin E."/>
            <person name="Tice H."/>
            <person name="Bruce D."/>
            <person name="Goodwin L."/>
            <person name="Pitluck S."/>
            <person name="Schmutz J."/>
            <person name="Larimer F."/>
            <person name="Land M."/>
            <person name="Hauser L."/>
            <person name="Kyrpides N."/>
            <person name="Anderson I."/>
            <person name="Liu Z."/>
            <person name="Li T."/>
            <person name="Zhao F."/>
            <person name="Overmann J."/>
            <person name="Bryant D.A."/>
            <person name="Richardson P."/>
        </authorList>
    </citation>
    <scope>NUCLEOTIDE SEQUENCE [LARGE SCALE GENOMIC DNA]</scope>
    <source>
        <strain>DSM 271 / SK 413</strain>
    </source>
</reference>
<keyword id="KW-0963">Cytoplasm</keyword>
<keyword id="KW-0238">DNA-binding</keyword>
<keyword id="KW-0804">Transcription</keyword>
<keyword id="KW-0805">Transcription regulation</keyword>
<dbReference type="EMBL" id="CP001108">
    <property type="protein sequence ID" value="ACF45552.1"/>
    <property type="molecule type" value="Genomic_DNA"/>
</dbReference>
<dbReference type="RefSeq" id="WP_012505089.1">
    <property type="nucleotide sequence ID" value="NC_011059.1"/>
</dbReference>
<dbReference type="SMR" id="B4S5F5"/>
<dbReference type="STRING" id="290512.Paes_0496"/>
<dbReference type="KEGG" id="paa:Paes_0496"/>
<dbReference type="eggNOG" id="COG0217">
    <property type="taxonomic scope" value="Bacteria"/>
</dbReference>
<dbReference type="HOGENOM" id="CLU_062974_2_2_10"/>
<dbReference type="Proteomes" id="UP000002725">
    <property type="component" value="Chromosome"/>
</dbReference>
<dbReference type="GO" id="GO:0005829">
    <property type="term" value="C:cytosol"/>
    <property type="evidence" value="ECO:0007669"/>
    <property type="project" value="TreeGrafter"/>
</dbReference>
<dbReference type="GO" id="GO:0003677">
    <property type="term" value="F:DNA binding"/>
    <property type="evidence" value="ECO:0007669"/>
    <property type="project" value="UniProtKB-UniRule"/>
</dbReference>
<dbReference type="GO" id="GO:0006355">
    <property type="term" value="P:regulation of DNA-templated transcription"/>
    <property type="evidence" value="ECO:0007669"/>
    <property type="project" value="UniProtKB-UniRule"/>
</dbReference>
<dbReference type="FunFam" id="1.10.10.200:FF:000002">
    <property type="entry name" value="Probable transcriptional regulatory protein CLM62_37755"/>
    <property type="match status" value="1"/>
</dbReference>
<dbReference type="Gene3D" id="1.10.10.200">
    <property type="match status" value="1"/>
</dbReference>
<dbReference type="Gene3D" id="3.30.70.980">
    <property type="match status" value="2"/>
</dbReference>
<dbReference type="HAMAP" id="MF_00693">
    <property type="entry name" value="Transcrip_reg_TACO1"/>
    <property type="match status" value="1"/>
</dbReference>
<dbReference type="InterPro" id="IPR017856">
    <property type="entry name" value="Integrase-like_N"/>
</dbReference>
<dbReference type="InterPro" id="IPR048300">
    <property type="entry name" value="TACO1_YebC-like_2nd/3rd_dom"/>
</dbReference>
<dbReference type="InterPro" id="IPR049083">
    <property type="entry name" value="TACO1_YebC_N"/>
</dbReference>
<dbReference type="InterPro" id="IPR002876">
    <property type="entry name" value="Transcrip_reg_TACO1-like"/>
</dbReference>
<dbReference type="InterPro" id="IPR026564">
    <property type="entry name" value="Transcrip_reg_TACO1-like_dom3"/>
</dbReference>
<dbReference type="InterPro" id="IPR029072">
    <property type="entry name" value="YebC-like"/>
</dbReference>
<dbReference type="NCBIfam" id="NF001030">
    <property type="entry name" value="PRK00110.1"/>
    <property type="match status" value="1"/>
</dbReference>
<dbReference type="NCBIfam" id="NF009044">
    <property type="entry name" value="PRK12378.1"/>
    <property type="match status" value="1"/>
</dbReference>
<dbReference type="NCBIfam" id="TIGR01033">
    <property type="entry name" value="YebC/PmpR family DNA-binding transcriptional regulator"/>
    <property type="match status" value="1"/>
</dbReference>
<dbReference type="PANTHER" id="PTHR12532:SF6">
    <property type="entry name" value="TRANSCRIPTIONAL REGULATORY PROTEIN YEBC-RELATED"/>
    <property type="match status" value="1"/>
</dbReference>
<dbReference type="PANTHER" id="PTHR12532">
    <property type="entry name" value="TRANSLATIONAL ACTIVATOR OF CYTOCHROME C OXIDASE 1"/>
    <property type="match status" value="1"/>
</dbReference>
<dbReference type="Pfam" id="PF20772">
    <property type="entry name" value="TACO1_YebC_N"/>
    <property type="match status" value="1"/>
</dbReference>
<dbReference type="Pfam" id="PF01709">
    <property type="entry name" value="Transcrip_reg"/>
    <property type="match status" value="1"/>
</dbReference>
<dbReference type="SUPFAM" id="SSF75625">
    <property type="entry name" value="YebC-like"/>
    <property type="match status" value="1"/>
</dbReference>
<sequence length="250" mass="27586">MSGHSKWSTIKRKKAATDQKRGNLFTKLVREITIAAKMGGGDPSGNPRLRLALDNARANSMPQENIQRAIKKGTGELDGVVYEEITYEGYGPGGIALIIETATDNRNRTVADIRHIINRSNGSLGENGSVSWMFHRKGCIDVLKSSAGEEELMEILLEAGLEDLNTDDEQFYNVIIDVKDLESAKKALDDKGIAYENARMDMIPDNYVELEAEDAVKAVKLIDALENSDDVQVVYSNIEFSEQAMNSLDS</sequence>
<protein>
    <recommendedName>
        <fullName evidence="1">Probable transcriptional regulatory protein Paes_0496</fullName>
    </recommendedName>
</protein>
<gene>
    <name type="ordered locus">Paes_0496</name>
</gene>
<accession>B4S5F5</accession>